<organism>
    <name type="scientific">Methylacidiphilum infernorum (isolate V4)</name>
    <name type="common">Methylokorus infernorum (strain V4)</name>
    <dbReference type="NCBI Taxonomy" id="481448"/>
    <lineage>
        <taxon>Bacteria</taxon>
        <taxon>Pseudomonadati</taxon>
        <taxon>Verrucomicrobiota</taxon>
        <taxon>Methylacidiphilae</taxon>
        <taxon>Methylacidiphilales</taxon>
        <taxon>Methylacidiphilaceae</taxon>
        <taxon>Methylacidiphilum (ex Ratnadevi et al. 2023)</taxon>
    </lineage>
</organism>
<comment type="function">
    <text evidence="1">Reversibly transfers an adenylyl group from ATP to 4'-phosphopantetheine, yielding dephospho-CoA (dPCoA) and pyrophosphate.</text>
</comment>
<comment type="catalytic activity">
    <reaction evidence="1">
        <text>(R)-4'-phosphopantetheine + ATP + H(+) = 3'-dephospho-CoA + diphosphate</text>
        <dbReference type="Rhea" id="RHEA:19801"/>
        <dbReference type="ChEBI" id="CHEBI:15378"/>
        <dbReference type="ChEBI" id="CHEBI:30616"/>
        <dbReference type="ChEBI" id="CHEBI:33019"/>
        <dbReference type="ChEBI" id="CHEBI:57328"/>
        <dbReference type="ChEBI" id="CHEBI:61723"/>
        <dbReference type="EC" id="2.7.7.3"/>
    </reaction>
</comment>
<comment type="cofactor">
    <cofactor evidence="1">
        <name>Mg(2+)</name>
        <dbReference type="ChEBI" id="CHEBI:18420"/>
    </cofactor>
</comment>
<comment type="pathway">
    <text evidence="1">Cofactor biosynthesis; coenzyme A biosynthesis; CoA from (R)-pantothenate: step 4/5.</text>
</comment>
<comment type="subunit">
    <text evidence="1">Homohexamer.</text>
</comment>
<comment type="subcellular location">
    <subcellularLocation>
        <location evidence="1">Cytoplasm</location>
    </subcellularLocation>
</comment>
<comment type="similarity">
    <text evidence="1">Belongs to the bacterial CoaD family.</text>
</comment>
<name>COAD_METI4</name>
<feature type="chain" id="PRO_1000118082" description="Phosphopantetheine adenylyltransferase">
    <location>
        <begin position="1"/>
        <end position="173"/>
    </location>
</feature>
<feature type="binding site" evidence="1">
    <location>
        <begin position="9"/>
        <end position="10"/>
    </location>
    <ligand>
        <name>ATP</name>
        <dbReference type="ChEBI" id="CHEBI:30616"/>
    </ligand>
</feature>
<feature type="binding site" evidence="1">
    <location>
        <position position="9"/>
    </location>
    <ligand>
        <name>substrate</name>
    </ligand>
</feature>
<feature type="binding site" evidence="1">
    <location>
        <position position="17"/>
    </location>
    <ligand>
        <name>ATP</name>
        <dbReference type="ChEBI" id="CHEBI:30616"/>
    </ligand>
</feature>
<feature type="binding site" evidence="1">
    <location>
        <position position="41"/>
    </location>
    <ligand>
        <name>substrate</name>
    </ligand>
</feature>
<feature type="binding site" evidence="1">
    <location>
        <position position="75"/>
    </location>
    <ligand>
        <name>substrate</name>
    </ligand>
</feature>
<feature type="binding site" evidence="1">
    <location>
        <position position="89"/>
    </location>
    <ligand>
        <name>substrate</name>
    </ligand>
</feature>
<feature type="binding site" evidence="1">
    <location>
        <begin position="90"/>
        <end position="92"/>
    </location>
    <ligand>
        <name>ATP</name>
        <dbReference type="ChEBI" id="CHEBI:30616"/>
    </ligand>
</feature>
<feature type="binding site" evidence="1">
    <location>
        <position position="100"/>
    </location>
    <ligand>
        <name>ATP</name>
        <dbReference type="ChEBI" id="CHEBI:30616"/>
    </ligand>
</feature>
<feature type="binding site" evidence="1">
    <location>
        <begin position="125"/>
        <end position="131"/>
    </location>
    <ligand>
        <name>ATP</name>
        <dbReference type="ChEBI" id="CHEBI:30616"/>
    </ligand>
</feature>
<feature type="site" description="Transition state stabilizer" evidence="1">
    <location>
        <position position="17"/>
    </location>
</feature>
<dbReference type="EC" id="2.7.7.3" evidence="1"/>
<dbReference type="EMBL" id="CP000975">
    <property type="protein sequence ID" value="ACD82483.1"/>
    <property type="molecule type" value="Genomic_DNA"/>
</dbReference>
<dbReference type="RefSeq" id="WP_012462765.1">
    <property type="nucleotide sequence ID" value="NC_010794.1"/>
</dbReference>
<dbReference type="SMR" id="B3DYW1"/>
<dbReference type="STRING" id="481448.Minf_0425"/>
<dbReference type="KEGG" id="min:Minf_0425"/>
<dbReference type="eggNOG" id="COG0669">
    <property type="taxonomic scope" value="Bacteria"/>
</dbReference>
<dbReference type="HOGENOM" id="CLU_100149_0_1_0"/>
<dbReference type="OrthoDB" id="9806661at2"/>
<dbReference type="UniPathway" id="UPA00241">
    <property type="reaction ID" value="UER00355"/>
</dbReference>
<dbReference type="Proteomes" id="UP000009149">
    <property type="component" value="Chromosome"/>
</dbReference>
<dbReference type="GO" id="GO:0005737">
    <property type="term" value="C:cytoplasm"/>
    <property type="evidence" value="ECO:0007669"/>
    <property type="project" value="UniProtKB-SubCell"/>
</dbReference>
<dbReference type="GO" id="GO:0005524">
    <property type="term" value="F:ATP binding"/>
    <property type="evidence" value="ECO:0007669"/>
    <property type="project" value="UniProtKB-KW"/>
</dbReference>
<dbReference type="GO" id="GO:0004595">
    <property type="term" value="F:pantetheine-phosphate adenylyltransferase activity"/>
    <property type="evidence" value="ECO:0007669"/>
    <property type="project" value="UniProtKB-UniRule"/>
</dbReference>
<dbReference type="GO" id="GO:0015937">
    <property type="term" value="P:coenzyme A biosynthetic process"/>
    <property type="evidence" value="ECO:0007669"/>
    <property type="project" value="UniProtKB-UniRule"/>
</dbReference>
<dbReference type="CDD" id="cd02163">
    <property type="entry name" value="PPAT"/>
    <property type="match status" value="1"/>
</dbReference>
<dbReference type="Gene3D" id="3.40.50.620">
    <property type="entry name" value="HUPs"/>
    <property type="match status" value="1"/>
</dbReference>
<dbReference type="HAMAP" id="MF_00151">
    <property type="entry name" value="PPAT_bact"/>
    <property type="match status" value="1"/>
</dbReference>
<dbReference type="InterPro" id="IPR004821">
    <property type="entry name" value="Cyt_trans-like"/>
</dbReference>
<dbReference type="InterPro" id="IPR001980">
    <property type="entry name" value="PPAT"/>
</dbReference>
<dbReference type="InterPro" id="IPR014729">
    <property type="entry name" value="Rossmann-like_a/b/a_fold"/>
</dbReference>
<dbReference type="NCBIfam" id="TIGR01510">
    <property type="entry name" value="coaD_prev_kdtB"/>
    <property type="match status" value="1"/>
</dbReference>
<dbReference type="NCBIfam" id="TIGR00125">
    <property type="entry name" value="cyt_tran_rel"/>
    <property type="match status" value="1"/>
</dbReference>
<dbReference type="PANTHER" id="PTHR21342">
    <property type="entry name" value="PHOSPHOPANTETHEINE ADENYLYLTRANSFERASE"/>
    <property type="match status" value="1"/>
</dbReference>
<dbReference type="PANTHER" id="PTHR21342:SF1">
    <property type="entry name" value="PHOSPHOPANTETHEINE ADENYLYLTRANSFERASE"/>
    <property type="match status" value="1"/>
</dbReference>
<dbReference type="Pfam" id="PF01467">
    <property type="entry name" value="CTP_transf_like"/>
    <property type="match status" value="1"/>
</dbReference>
<dbReference type="PRINTS" id="PR01020">
    <property type="entry name" value="LPSBIOSNTHSS"/>
</dbReference>
<dbReference type="SUPFAM" id="SSF52374">
    <property type="entry name" value="Nucleotidylyl transferase"/>
    <property type="match status" value="1"/>
</dbReference>
<reference key="1">
    <citation type="journal article" date="2008" name="Biol. Direct">
        <title>Complete genome sequence of the extremely acidophilic methanotroph isolate V4, Methylacidiphilum infernorum, a representative of the bacterial phylum Verrucomicrobia.</title>
        <authorList>
            <person name="Hou S."/>
            <person name="Makarova K.S."/>
            <person name="Saw J.H."/>
            <person name="Senin P."/>
            <person name="Ly B.V."/>
            <person name="Zhou Z."/>
            <person name="Ren Y."/>
            <person name="Wang J."/>
            <person name="Galperin M.Y."/>
            <person name="Omelchenko M.V."/>
            <person name="Wolf Y.I."/>
            <person name="Yutin N."/>
            <person name="Koonin E.V."/>
            <person name="Stott M.B."/>
            <person name="Mountain B.W."/>
            <person name="Crowe M.A."/>
            <person name="Smirnova A.V."/>
            <person name="Dunfield P.F."/>
            <person name="Feng L."/>
            <person name="Wang L."/>
            <person name="Alam M."/>
        </authorList>
    </citation>
    <scope>NUCLEOTIDE SEQUENCE [LARGE SCALE GENOMIC DNA]</scope>
    <source>
        <strain>Isolate V4</strain>
    </source>
</reference>
<sequence>MKRVLYPGTFDPITLGHVDVISKAARLFDEVVVGVAAQTPKETLFELEERMELVERTLKHFSFSNAIALPYTGLTVDFAKELNCCAIIRGLRAVSDFETEFQLALMNRRLKPEIETLFLMPEDNHIYLSSSLVKEISRLGGEISAFVPTVVMEALKQKIGKRNSNPVAISRPR</sequence>
<accession>B3DYW1</accession>
<evidence type="ECO:0000255" key="1">
    <source>
        <dbReference type="HAMAP-Rule" id="MF_00151"/>
    </source>
</evidence>
<protein>
    <recommendedName>
        <fullName evidence="1">Phosphopantetheine adenylyltransferase</fullName>
        <ecNumber evidence="1">2.7.7.3</ecNumber>
    </recommendedName>
    <alternativeName>
        <fullName evidence="1">Dephospho-CoA pyrophosphorylase</fullName>
    </alternativeName>
    <alternativeName>
        <fullName evidence="1">Pantetheine-phosphate adenylyltransferase</fullName>
        <shortName evidence="1">PPAT</shortName>
    </alternativeName>
</protein>
<gene>
    <name evidence="1" type="primary">coaD</name>
    <name type="ordered locus">Minf_0425</name>
</gene>
<proteinExistence type="inferred from homology"/>
<keyword id="KW-0067">ATP-binding</keyword>
<keyword id="KW-0173">Coenzyme A biosynthesis</keyword>
<keyword id="KW-0963">Cytoplasm</keyword>
<keyword id="KW-0460">Magnesium</keyword>
<keyword id="KW-0547">Nucleotide-binding</keyword>
<keyword id="KW-0548">Nucleotidyltransferase</keyword>
<keyword id="KW-0808">Transferase</keyword>